<evidence type="ECO:0000255" key="1">
    <source>
        <dbReference type="HAMAP-Rule" id="MF_01956"/>
    </source>
</evidence>
<proteinExistence type="inferred from homology"/>
<keyword id="KW-0963">Cytoplasm</keyword>
<keyword id="KW-0227">DNA damage</keyword>
<keyword id="KW-0228">DNA excision</keyword>
<keyword id="KW-0234">DNA repair</keyword>
<keyword id="KW-0238">DNA-binding</keyword>
<keyword id="KW-0378">Hydrolase</keyword>
<keyword id="KW-1185">Reference proteome</keyword>
<sequence length="168" mass="18673">MVEDILAPGLRVVFCGINPGLSSAGTGFPFAHPANRFWKVIYQAGFTDRQLKPQEAQHLLDYRCGVTKLVDRPTVQANEVSKQELHAGGRKLIEKIEDYQPQALAILGKQAYEQGFSQRGAQWGKQTLTIGSTQIWVLPNPSGLSRVSLEKLVEAYRELDQALVVRGR</sequence>
<reference key="1">
    <citation type="journal article" date="2007" name="J. Bacteriol.">
        <title>The genome sequence of avian pathogenic Escherichia coli strain O1:K1:H7 shares strong similarities with human extraintestinal pathogenic E. coli genomes.</title>
        <authorList>
            <person name="Johnson T.J."/>
            <person name="Kariyawasam S."/>
            <person name="Wannemuehler Y."/>
            <person name="Mangiamele P."/>
            <person name="Johnson S.J."/>
            <person name="Doetkott C."/>
            <person name="Skyberg J.A."/>
            <person name="Lynne A.M."/>
            <person name="Johnson J.R."/>
            <person name="Nolan L.K."/>
        </authorList>
    </citation>
    <scope>NUCLEOTIDE SEQUENCE [LARGE SCALE GENOMIC DNA]</scope>
</reference>
<name>MUG_ECOK1</name>
<protein>
    <recommendedName>
        <fullName evidence="1">G/U mismatch-specific DNA glycosylase</fullName>
        <ecNumber evidence="1">3.2.2.28</ecNumber>
    </recommendedName>
    <alternativeName>
        <fullName evidence="1">Double-strand-specific uracil glycosylase</fullName>
    </alternativeName>
    <alternativeName>
        <fullName evidence="1">Mismatch-specific uracil DNA-glycosylase</fullName>
        <shortName evidence="1">MUG</shortName>
    </alternativeName>
</protein>
<organism>
    <name type="scientific">Escherichia coli O1:K1 / APEC</name>
    <dbReference type="NCBI Taxonomy" id="405955"/>
    <lineage>
        <taxon>Bacteria</taxon>
        <taxon>Pseudomonadati</taxon>
        <taxon>Pseudomonadota</taxon>
        <taxon>Gammaproteobacteria</taxon>
        <taxon>Enterobacterales</taxon>
        <taxon>Enterobacteriaceae</taxon>
        <taxon>Escherichia</taxon>
    </lineage>
</organism>
<dbReference type="EC" id="3.2.2.28" evidence="1"/>
<dbReference type="EMBL" id="CP000468">
    <property type="protein sequence ID" value="ABJ02579.1"/>
    <property type="molecule type" value="Genomic_DNA"/>
</dbReference>
<dbReference type="RefSeq" id="WP_000228937.1">
    <property type="nucleotide sequence ID" value="NZ_CADILS010000003.1"/>
</dbReference>
<dbReference type="SMR" id="A1AFY9"/>
<dbReference type="GeneID" id="93778924"/>
<dbReference type="KEGG" id="ecv:APECO1_3347"/>
<dbReference type="HOGENOM" id="CLU_042829_3_1_6"/>
<dbReference type="Proteomes" id="UP000008216">
    <property type="component" value="Chromosome"/>
</dbReference>
<dbReference type="GO" id="GO:0005737">
    <property type="term" value="C:cytoplasm"/>
    <property type="evidence" value="ECO:0007669"/>
    <property type="project" value="UniProtKB-SubCell"/>
</dbReference>
<dbReference type="GO" id="GO:0003677">
    <property type="term" value="F:DNA binding"/>
    <property type="evidence" value="ECO:0007669"/>
    <property type="project" value="UniProtKB-KW"/>
</dbReference>
<dbReference type="GO" id="GO:0008263">
    <property type="term" value="F:pyrimidine-specific mismatch base pair DNA N-glycosylase activity"/>
    <property type="evidence" value="ECO:0007669"/>
    <property type="project" value="UniProtKB-UniRule"/>
</dbReference>
<dbReference type="GO" id="GO:0004844">
    <property type="term" value="F:uracil DNA N-glycosylase activity"/>
    <property type="evidence" value="ECO:0007669"/>
    <property type="project" value="TreeGrafter"/>
</dbReference>
<dbReference type="GO" id="GO:0006285">
    <property type="term" value="P:base-excision repair, AP site formation"/>
    <property type="evidence" value="ECO:0007669"/>
    <property type="project" value="UniProtKB-UniRule"/>
</dbReference>
<dbReference type="CDD" id="cd10028">
    <property type="entry name" value="UDG-F2_TDG_MUG"/>
    <property type="match status" value="1"/>
</dbReference>
<dbReference type="FunFam" id="3.40.470.10:FF:000003">
    <property type="entry name" value="G/U mismatch-specific DNA glycosylase"/>
    <property type="match status" value="1"/>
</dbReference>
<dbReference type="Gene3D" id="3.40.470.10">
    <property type="entry name" value="Uracil-DNA glycosylase-like domain"/>
    <property type="match status" value="1"/>
</dbReference>
<dbReference type="HAMAP" id="MF_01956">
    <property type="entry name" value="MUG"/>
    <property type="match status" value="1"/>
</dbReference>
<dbReference type="InterPro" id="IPR015637">
    <property type="entry name" value="MUG/TDG"/>
</dbReference>
<dbReference type="InterPro" id="IPR023502">
    <property type="entry name" value="MUG_bact"/>
</dbReference>
<dbReference type="InterPro" id="IPR005122">
    <property type="entry name" value="Uracil-DNA_glycosylase-like"/>
</dbReference>
<dbReference type="InterPro" id="IPR036895">
    <property type="entry name" value="Uracil-DNA_glycosylase-like_sf"/>
</dbReference>
<dbReference type="NCBIfam" id="NF007570">
    <property type="entry name" value="PRK10201.1"/>
    <property type="match status" value="1"/>
</dbReference>
<dbReference type="PANTHER" id="PTHR12159">
    <property type="entry name" value="G/T AND G/U MISMATCH-SPECIFIC DNA GLYCOSYLASE"/>
    <property type="match status" value="1"/>
</dbReference>
<dbReference type="PANTHER" id="PTHR12159:SF9">
    <property type="entry name" value="G_T MISMATCH-SPECIFIC THYMINE DNA GLYCOSYLASE"/>
    <property type="match status" value="1"/>
</dbReference>
<dbReference type="Pfam" id="PF03167">
    <property type="entry name" value="UDG"/>
    <property type="match status" value="1"/>
</dbReference>
<dbReference type="SUPFAM" id="SSF52141">
    <property type="entry name" value="Uracil-DNA glycosylase-like"/>
    <property type="match status" value="1"/>
</dbReference>
<accession>A1AFY9</accession>
<feature type="chain" id="PRO_1000070789" description="G/U mismatch-specific DNA glycosylase">
    <location>
        <begin position="1"/>
        <end position="168"/>
    </location>
</feature>
<comment type="function">
    <text evidence="1">Excises ethenocytosine and uracil, which can arise by alkylation or deamination of cytosine, respectively, from the corresponding mispairs with guanine in ds-DNA. It is capable of hydrolyzing the carbon-nitrogen bond between the sugar-phosphate backbone of the DNA and the mispaired base. The complementary strand guanine functions in substrate recognition. Required for DNA damage lesion repair in stationary-phase cells.</text>
</comment>
<comment type="catalytic activity">
    <reaction evidence="1">
        <text>Specifically hydrolyzes mismatched double-stranded DNA and polynucleotides, releasing free uracil.</text>
        <dbReference type="EC" id="3.2.2.28"/>
    </reaction>
</comment>
<comment type="subunit">
    <text evidence="1">Binds DNA as a monomer.</text>
</comment>
<comment type="subcellular location">
    <subcellularLocation>
        <location evidence="1">Cytoplasm</location>
    </subcellularLocation>
</comment>
<comment type="similarity">
    <text evidence="1">Belongs to the uracil-DNA glycosylase (UDG) superfamily. TDG/mug family.</text>
</comment>
<gene>
    <name evidence="1" type="primary">mug</name>
    <name type="ordered locus">Ecok1_30850</name>
    <name type="ORF">APECO1_3347</name>
</gene>